<accession>B3H1B8</accession>
<evidence type="ECO:0000255" key="1">
    <source>
        <dbReference type="HAMAP-Rule" id="MF_00233"/>
    </source>
</evidence>
<comment type="function">
    <text evidence="1">Plays a critical role in the incorporation of lipoproteins in the outer membrane after they are released by the LolA protein.</text>
</comment>
<comment type="subunit">
    <text evidence="1">Monomer.</text>
</comment>
<comment type="subcellular location">
    <subcellularLocation>
        <location evidence="1">Cell outer membrane</location>
        <topology evidence="1">Lipid-anchor</topology>
    </subcellularLocation>
</comment>
<comment type="similarity">
    <text evidence="1">Belongs to the LolB family.</text>
</comment>
<keyword id="KW-0998">Cell outer membrane</keyword>
<keyword id="KW-0143">Chaperone</keyword>
<keyword id="KW-0449">Lipoprotein</keyword>
<keyword id="KW-0472">Membrane</keyword>
<keyword id="KW-0564">Palmitate</keyword>
<keyword id="KW-0653">Protein transport</keyword>
<keyword id="KW-0732">Signal</keyword>
<keyword id="KW-0813">Transport</keyword>
<sequence length="210" mass="24155">MKKFTKILSLSTLLFLAGCQSVLNEPTEVQQPGVQIPHNDAQWQQHLQQLAKIQSYSAKGQIGYISPEERFSSHFDWQYRTPTNFGLELSSNLSSKSLKLQRNARGLTISDSEGNSRSDRDMDSLMKEIIGVAFPIDQFAYWLKGQPEQDGNYIVNDKRQLSQFSYHINGEVWKASYVQYHEDRQPNLPKLIVLENGSQTLKIRVDQWAF</sequence>
<reference key="1">
    <citation type="submission" date="2008-06" db="EMBL/GenBank/DDBJ databases">
        <title>Genome and proteome analysis of A. pleuropneumoniae serotype 7.</title>
        <authorList>
            <person name="Linke B."/>
            <person name="Buettner F."/>
            <person name="Martinez-Arias R."/>
            <person name="Goesmann A."/>
            <person name="Baltes N."/>
            <person name="Tegetmeyer H."/>
            <person name="Singh M."/>
            <person name="Gerlach G.F."/>
        </authorList>
    </citation>
    <scope>NUCLEOTIDE SEQUENCE [LARGE SCALE GENOMIC DNA]</scope>
    <source>
        <strain>AP76</strain>
    </source>
</reference>
<dbReference type="EMBL" id="CP001091">
    <property type="protein sequence ID" value="ACE61490.1"/>
    <property type="molecule type" value="Genomic_DNA"/>
</dbReference>
<dbReference type="RefSeq" id="WP_005597216.1">
    <property type="nucleotide sequence ID" value="NC_010939.1"/>
</dbReference>
<dbReference type="SMR" id="B3H1B8"/>
<dbReference type="GeneID" id="48598963"/>
<dbReference type="KEGG" id="apa:APP7_0838"/>
<dbReference type="HOGENOM" id="CLU_092816_1_1_6"/>
<dbReference type="Proteomes" id="UP000001226">
    <property type="component" value="Chromosome"/>
</dbReference>
<dbReference type="GO" id="GO:0009279">
    <property type="term" value="C:cell outer membrane"/>
    <property type="evidence" value="ECO:0007669"/>
    <property type="project" value="UniProtKB-SubCell"/>
</dbReference>
<dbReference type="GO" id="GO:0044874">
    <property type="term" value="P:lipoprotein localization to outer membrane"/>
    <property type="evidence" value="ECO:0007669"/>
    <property type="project" value="UniProtKB-UniRule"/>
</dbReference>
<dbReference type="GO" id="GO:0015031">
    <property type="term" value="P:protein transport"/>
    <property type="evidence" value="ECO:0007669"/>
    <property type="project" value="UniProtKB-KW"/>
</dbReference>
<dbReference type="CDD" id="cd16326">
    <property type="entry name" value="LolB"/>
    <property type="match status" value="1"/>
</dbReference>
<dbReference type="Gene3D" id="2.50.20.10">
    <property type="entry name" value="Lipoprotein localisation LolA/LolB/LppX"/>
    <property type="match status" value="1"/>
</dbReference>
<dbReference type="HAMAP" id="MF_00233">
    <property type="entry name" value="LolB"/>
    <property type="match status" value="1"/>
</dbReference>
<dbReference type="InterPro" id="IPR029046">
    <property type="entry name" value="LolA/LolB/LppX"/>
</dbReference>
<dbReference type="InterPro" id="IPR004565">
    <property type="entry name" value="OM_lipoprot_LolB"/>
</dbReference>
<dbReference type="NCBIfam" id="TIGR00548">
    <property type="entry name" value="lolB"/>
    <property type="match status" value="1"/>
</dbReference>
<dbReference type="Pfam" id="PF03550">
    <property type="entry name" value="LolB"/>
    <property type="match status" value="1"/>
</dbReference>
<dbReference type="SUPFAM" id="SSF89392">
    <property type="entry name" value="Prokaryotic lipoproteins and lipoprotein localization factors"/>
    <property type="match status" value="1"/>
</dbReference>
<dbReference type="PROSITE" id="PS51257">
    <property type="entry name" value="PROKAR_LIPOPROTEIN"/>
    <property type="match status" value="1"/>
</dbReference>
<gene>
    <name evidence="1" type="primary">lolB</name>
    <name type="ordered locus">APP7_0838</name>
</gene>
<organism>
    <name type="scientific">Actinobacillus pleuropneumoniae serotype 7 (strain AP76)</name>
    <dbReference type="NCBI Taxonomy" id="537457"/>
    <lineage>
        <taxon>Bacteria</taxon>
        <taxon>Pseudomonadati</taxon>
        <taxon>Pseudomonadota</taxon>
        <taxon>Gammaproteobacteria</taxon>
        <taxon>Pasteurellales</taxon>
        <taxon>Pasteurellaceae</taxon>
        <taxon>Actinobacillus</taxon>
    </lineage>
</organism>
<proteinExistence type="inferred from homology"/>
<feature type="signal peptide" evidence="1">
    <location>
        <begin position="1"/>
        <end position="18"/>
    </location>
</feature>
<feature type="chain" id="PRO_1000100489" description="Outer-membrane lipoprotein LolB">
    <location>
        <begin position="19"/>
        <end position="210"/>
    </location>
</feature>
<feature type="lipid moiety-binding region" description="N-palmitoyl cysteine" evidence="1">
    <location>
        <position position="19"/>
    </location>
</feature>
<feature type="lipid moiety-binding region" description="S-diacylglycerol cysteine" evidence="1">
    <location>
        <position position="19"/>
    </location>
</feature>
<protein>
    <recommendedName>
        <fullName evidence="1">Outer-membrane lipoprotein LolB</fullName>
    </recommendedName>
</protein>
<name>LOLB_ACTP7</name>